<feature type="chain" id="PRO_1000030469" description="D-alanine--D-alanine ligase">
    <location>
        <begin position="1"/>
        <end position="373"/>
    </location>
</feature>
<feature type="domain" description="ATP-grasp" evidence="2">
    <location>
        <begin position="156"/>
        <end position="363"/>
    </location>
</feature>
<feature type="binding site" evidence="2">
    <location>
        <begin position="184"/>
        <end position="239"/>
    </location>
    <ligand>
        <name>ATP</name>
        <dbReference type="ChEBI" id="CHEBI:30616"/>
    </ligand>
</feature>
<feature type="binding site" evidence="2">
    <location>
        <position position="318"/>
    </location>
    <ligand>
        <name>Mg(2+)</name>
        <dbReference type="ChEBI" id="CHEBI:18420"/>
        <label>1</label>
    </ligand>
</feature>
<feature type="binding site" evidence="2">
    <location>
        <position position="330"/>
    </location>
    <ligand>
        <name>Mg(2+)</name>
        <dbReference type="ChEBI" id="CHEBI:18420"/>
        <label>1</label>
    </ligand>
</feature>
<feature type="binding site" evidence="2">
    <location>
        <position position="330"/>
    </location>
    <ligand>
        <name>Mg(2+)</name>
        <dbReference type="ChEBI" id="CHEBI:18420"/>
        <label>2</label>
    </ligand>
</feature>
<feature type="binding site" evidence="2">
    <location>
        <position position="332"/>
    </location>
    <ligand>
        <name>Mg(2+)</name>
        <dbReference type="ChEBI" id="CHEBI:18420"/>
        <label>2</label>
    </ligand>
</feature>
<comment type="function">
    <text evidence="2">Cell wall formation.</text>
</comment>
<comment type="catalytic activity">
    <reaction evidence="2">
        <text>2 D-alanine + ATP = D-alanyl-D-alanine + ADP + phosphate + H(+)</text>
        <dbReference type="Rhea" id="RHEA:11224"/>
        <dbReference type="ChEBI" id="CHEBI:15378"/>
        <dbReference type="ChEBI" id="CHEBI:30616"/>
        <dbReference type="ChEBI" id="CHEBI:43474"/>
        <dbReference type="ChEBI" id="CHEBI:57416"/>
        <dbReference type="ChEBI" id="CHEBI:57822"/>
        <dbReference type="ChEBI" id="CHEBI:456216"/>
        <dbReference type="EC" id="6.3.2.4"/>
    </reaction>
</comment>
<comment type="cofactor">
    <cofactor evidence="1">
        <name>Mg(2+)</name>
        <dbReference type="ChEBI" id="CHEBI:18420"/>
    </cofactor>
    <cofactor evidence="1">
        <name>Mn(2+)</name>
        <dbReference type="ChEBI" id="CHEBI:29035"/>
    </cofactor>
    <text evidence="1">Binds 2 magnesium or manganese ions per subunit.</text>
</comment>
<comment type="pathway">
    <text evidence="2">Cell wall biogenesis; peptidoglycan biosynthesis.</text>
</comment>
<comment type="subcellular location">
    <subcellularLocation>
        <location evidence="2">Cytoplasm</location>
    </subcellularLocation>
</comment>
<comment type="similarity">
    <text evidence="2">Belongs to the D-alanine--D-alanine ligase family.</text>
</comment>
<evidence type="ECO:0000250" key="1"/>
<evidence type="ECO:0000255" key="2">
    <source>
        <dbReference type="HAMAP-Rule" id="MF_00047"/>
    </source>
</evidence>
<keyword id="KW-0067">ATP-binding</keyword>
<keyword id="KW-0133">Cell shape</keyword>
<keyword id="KW-0961">Cell wall biogenesis/degradation</keyword>
<keyword id="KW-0963">Cytoplasm</keyword>
<keyword id="KW-0436">Ligase</keyword>
<keyword id="KW-0460">Magnesium</keyword>
<keyword id="KW-0464">Manganese</keyword>
<keyword id="KW-0479">Metal-binding</keyword>
<keyword id="KW-0547">Nucleotide-binding</keyword>
<keyword id="KW-0573">Peptidoglycan synthesis</keyword>
<keyword id="KW-1185">Reference proteome</keyword>
<protein>
    <recommendedName>
        <fullName evidence="2">D-alanine--D-alanine ligase</fullName>
        <ecNumber evidence="2">6.3.2.4</ecNumber>
    </recommendedName>
    <alternativeName>
        <fullName evidence="2">D-Ala-D-Ala ligase</fullName>
    </alternativeName>
    <alternativeName>
        <fullName evidence="2">D-alanylalanine synthetase</fullName>
    </alternativeName>
</protein>
<organism>
    <name type="scientific">Mycolicibacterium smegmatis (strain ATCC 700084 / mc(2)155)</name>
    <name type="common">Mycobacterium smegmatis</name>
    <dbReference type="NCBI Taxonomy" id="246196"/>
    <lineage>
        <taxon>Bacteria</taxon>
        <taxon>Bacillati</taxon>
        <taxon>Actinomycetota</taxon>
        <taxon>Actinomycetes</taxon>
        <taxon>Mycobacteriales</taxon>
        <taxon>Mycobacteriaceae</taxon>
        <taxon>Mycolicibacterium</taxon>
    </lineage>
</organism>
<gene>
    <name evidence="2" type="primary">ddl</name>
    <name type="ordered locus">MSMEG_2395</name>
    <name type="ordered locus">MSMEI_2335</name>
</gene>
<dbReference type="EC" id="6.3.2.4" evidence="2"/>
<dbReference type="EMBL" id="CP000480">
    <property type="protein sequence ID" value="ABK70518.1"/>
    <property type="molecule type" value="Genomic_DNA"/>
</dbReference>
<dbReference type="EMBL" id="CP001663">
    <property type="protein sequence ID" value="AFP38803.1"/>
    <property type="molecule type" value="Genomic_DNA"/>
</dbReference>
<dbReference type="RefSeq" id="WP_011728314.1">
    <property type="nucleotide sequence ID" value="NZ_SIJM01000012.1"/>
</dbReference>
<dbReference type="RefSeq" id="YP_886735.1">
    <property type="nucleotide sequence ID" value="NC_008596.1"/>
</dbReference>
<dbReference type="SMR" id="A0QUZ7"/>
<dbReference type="STRING" id="246196.MSMEG_2395"/>
<dbReference type="PaxDb" id="246196-MSMEI_2335"/>
<dbReference type="KEGG" id="msb:LJ00_11910"/>
<dbReference type="KEGG" id="msg:MSMEI_2335"/>
<dbReference type="KEGG" id="msm:MSMEG_2395"/>
<dbReference type="PATRIC" id="fig|246196.19.peg.2359"/>
<dbReference type="eggNOG" id="COG1181">
    <property type="taxonomic scope" value="Bacteria"/>
</dbReference>
<dbReference type="OrthoDB" id="9813261at2"/>
<dbReference type="UniPathway" id="UPA00219"/>
<dbReference type="Proteomes" id="UP000000757">
    <property type="component" value="Chromosome"/>
</dbReference>
<dbReference type="Proteomes" id="UP000006158">
    <property type="component" value="Chromosome"/>
</dbReference>
<dbReference type="GO" id="GO:0005829">
    <property type="term" value="C:cytosol"/>
    <property type="evidence" value="ECO:0007669"/>
    <property type="project" value="TreeGrafter"/>
</dbReference>
<dbReference type="GO" id="GO:0005524">
    <property type="term" value="F:ATP binding"/>
    <property type="evidence" value="ECO:0007669"/>
    <property type="project" value="UniProtKB-KW"/>
</dbReference>
<dbReference type="GO" id="GO:0008716">
    <property type="term" value="F:D-alanine-D-alanine ligase activity"/>
    <property type="evidence" value="ECO:0007669"/>
    <property type="project" value="UniProtKB-UniRule"/>
</dbReference>
<dbReference type="GO" id="GO:0046872">
    <property type="term" value="F:metal ion binding"/>
    <property type="evidence" value="ECO:0007669"/>
    <property type="project" value="UniProtKB-KW"/>
</dbReference>
<dbReference type="GO" id="GO:0071555">
    <property type="term" value="P:cell wall organization"/>
    <property type="evidence" value="ECO:0007669"/>
    <property type="project" value="UniProtKB-KW"/>
</dbReference>
<dbReference type="GO" id="GO:0009252">
    <property type="term" value="P:peptidoglycan biosynthetic process"/>
    <property type="evidence" value="ECO:0007669"/>
    <property type="project" value="UniProtKB-UniRule"/>
</dbReference>
<dbReference type="GO" id="GO:0008360">
    <property type="term" value="P:regulation of cell shape"/>
    <property type="evidence" value="ECO:0007669"/>
    <property type="project" value="UniProtKB-KW"/>
</dbReference>
<dbReference type="FunFam" id="3.30.470.20:FF:000008">
    <property type="entry name" value="D-alanine--D-alanine ligase"/>
    <property type="match status" value="1"/>
</dbReference>
<dbReference type="Gene3D" id="3.40.50.20">
    <property type="match status" value="1"/>
</dbReference>
<dbReference type="Gene3D" id="3.30.1490.20">
    <property type="entry name" value="ATP-grasp fold, A domain"/>
    <property type="match status" value="1"/>
</dbReference>
<dbReference type="Gene3D" id="3.30.470.20">
    <property type="entry name" value="ATP-grasp fold, B domain"/>
    <property type="match status" value="1"/>
</dbReference>
<dbReference type="HAMAP" id="MF_00047">
    <property type="entry name" value="Dala_Dala_lig"/>
    <property type="match status" value="1"/>
</dbReference>
<dbReference type="InterPro" id="IPR011761">
    <property type="entry name" value="ATP-grasp"/>
</dbReference>
<dbReference type="InterPro" id="IPR013815">
    <property type="entry name" value="ATP_grasp_subdomain_1"/>
</dbReference>
<dbReference type="InterPro" id="IPR000291">
    <property type="entry name" value="D-Ala_lig_Van_CS"/>
</dbReference>
<dbReference type="InterPro" id="IPR005905">
    <property type="entry name" value="D_ala_D_ala"/>
</dbReference>
<dbReference type="InterPro" id="IPR011095">
    <property type="entry name" value="Dala_Dala_lig_C"/>
</dbReference>
<dbReference type="InterPro" id="IPR011127">
    <property type="entry name" value="Dala_Dala_lig_N"/>
</dbReference>
<dbReference type="InterPro" id="IPR016185">
    <property type="entry name" value="PreATP-grasp_dom_sf"/>
</dbReference>
<dbReference type="NCBIfam" id="TIGR01205">
    <property type="entry name" value="D_ala_D_alaTIGR"/>
    <property type="match status" value="1"/>
</dbReference>
<dbReference type="NCBIfam" id="NF002378">
    <property type="entry name" value="PRK01372.1"/>
    <property type="match status" value="1"/>
</dbReference>
<dbReference type="NCBIfam" id="NF002528">
    <property type="entry name" value="PRK01966.1-4"/>
    <property type="match status" value="1"/>
</dbReference>
<dbReference type="PANTHER" id="PTHR23132">
    <property type="entry name" value="D-ALANINE--D-ALANINE LIGASE"/>
    <property type="match status" value="1"/>
</dbReference>
<dbReference type="PANTHER" id="PTHR23132:SF25">
    <property type="entry name" value="D-ALANINE--D-ALANINE LIGASE A"/>
    <property type="match status" value="1"/>
</dbReference>
<dbReference type="Pfam" id="PF07478">
    <property type="entry name" value="Dala_Dala_lig_C"/>
    <property type="match status" value="1"/>
</dbReference>
<dbReference type="Pfam" id="PF01820">
    <property type="entry name" value="Dala_Dala_lig_N"/>
    <property type="match status" value="1"/>
</dbReference>
<dbReference type="PIRSF" id="PIRSF039102">
    <property type="entry name" value="Ddl/VanB"/>
    <property type="match status" value="1"/>
</dbReference>
<dbReference type="SUPFAM" id="SSF56059">
    <property type="entry name" value="Glutathione synthetase ATP-binding domain-like"/>
    <property type="match status" value="1"/>
</dbReference>
<dbReference type="SUPFAM" id="SSF52440">
    <property type="entry name" value="PreATP-grasp domain"/>
    <property type="match status" value="1"/>
</dbReference>
<dbReference type="PROSITE" id="PS50975">
    <property type="entry name" value="ATP_GRASP"/>
    <property type="match status" value="1"/>
</dbReference>
<dbReference type="PROSITE" id="PS00843">
    <property type="entry name" value="DALA_DALA_LIGASE_1"/>
    <property type="match status" value="1"/>
</dbReference>
<dbReference type="PROSITE" id="PS00844">
    <property type="entry name" value="DALA_DALA_LIGASE_2"/>
    <property type="match status" value="1"/>
</dbReference>
<reference key="1">
    <citation type="submission" date="2006-10" db="EMBL/GenBank/DDBJ databases">
        <authorList>
            <person name="Fleischmann R.D."/>
            <person name="Dodson R.J."/>
            <person name="Haft D.H."/>
            <person name="Merkel J.S."/>
            <person name="Nelson W.C."/>
            <person name="Fraser C.M."/>
        </authorList>
    </citation>
    <scope>NUCLEOTIDE SEQUENCE [LARGE SCALE GENOMIC DNA]</scope>
    <source>
        <strain>ATCC 700084 / mc(2)155</strain>
    </source>
</reference>
<reference key="2">
    <citation type="journal article" date="2007" name="Genome Biol.">
        <title>Interrupted coding sequences in Mycobacterium smegmatis: authentic mutations or sequencing errors?</title>
        <authorList>
            <person name="Deshayes C."/>
            <person name="Perrodou E."/>
            <person name="Gallien S."/>
            <person name="Euphrasie D."/>
            <person name="Schaeffer C."/>
            <person name="Van-Dorsselaer A."/>
            <person name="Poch O."/>
            <person name="Lecompte O."/>
            <person name="Reyrat J.-M."/>
        </authorList>
    </citation>
    <scope>NUCLEOTIDE SEQUENCE [LARGE SCALE GENOMIC DNA]</scope>
    <source>
        <strain>ATCC 700084 / mc(2)155</strain>
    </source>
</reference>
<reference key="3">
    <citation type="journal article" date="2009" name="Genome Res.">
        <title>Ortho-proteogenomics: multiple proteomes investigation through orthology and a new MS-based protocol.</title>
        <authorList>
            <person name="Gallien S."/>
            <person name="Perrodou E."/>
            <person name="Carapito C."/>
            <person name="Deshayes C."/>
            <person name="Reyrat J.-M."/>
            <person name="Van Dorsselaer A."/>
            <person name="Poch O."/>
            <person name="Schaeffer C."/>
            <person name="Lecompte O."/>
        </authorList>
    </citation>
    <scope>NUCLEOTIDE SEQUENCE [LARGE SCALE GENOMIC DNA]</scope>
    <source>
        <strain>ATCC 700084 / mc(2)155</strain>
    </source>
</reference>
<sequence>MTAPNHPPGRTRVAVVYGGRSSEHAISCVSAGSILRNLDPERFEVVAIGITPDGSWVLTDGRPETLAITDGKLPAVTEASGTELALPAAPNRSGQLLALGNGPGEILAAVDVVFPVLHGPYGEDGTIQGLLELAGVPYVGSGVLASAAGMDKEYTKKLLAAEGLPIGDQVVLRPGVETLDLEQRERLGLPVFVKPARGGSSIGVSRVTAWDELPAAVALARRHDPKVIVEAAVIGRELECGVLEFPDGRLEASTVGEIRVAGVRGREDGFYDFATKYLEDAAELDVPAKVDDDVADEIRQLAVRAFTAIGCQGLARVDFFLTDDGPVINEINTMPGFTTISMYPRMWAAGGIDYPTLLAAMVDTAIARGTGLR</sequence>
<accession>A0QUZ7</accession>
<accession>I7FJ47</accession>
<proteinExistence type="inferred from homology"/>
<name>DDL_MYCS2</name>